<feature type="chain" id="PRO_1000085916" description="Small ribosomal subunit protein uS8">
    <location>
        <begin position="1"/>
        <end position="132"/>
    </location>
</feature>
<sequence length="132" mass="14772">MVMTDPIADLLTRIRNANVVRHEVVEVPSSTIKKAVLNIMLQEGYIKNLEEYADGSVNMIRLSMKYGKNKERVITGLKRISKPGLRVYCRKEEIPKVLNGLGVAIISTSKGIVTDREARKLGVGGEVLCYIW</sequence>
<dbReference type="EMBL" id="CP000673">
    <property type="protein sequence ID" value="EDK32292.1"/>
    <property type="molecule type" value="Genomic_DNA"/>
</dbReference>
<dbReference type="RefSeq" id="WP_011988817.1">
    <property type="nucleotide sequence ID" value="NC_009706.1"/>
</dbReference>
<dbReference type="SMR" id="A5N4R1"/>
<dbReference type="STRING" id="431943.CKL_0238"/>
<dbReference type="KEGG" id="ckl:CKL_0238"/>
<dbReference type="eggNOG" id="COG0096">
    <property type="taxonomic scope" value="Bacteria"/>
</dbReference>
<dbReference type="HOGENOM" id="CLU_098428_0_2_9"/>
<dbReference type="Proteomes" id="UP000002411">
    <property type="component" value="Chromosome"/>
</dbReference>
<dbReference type="GO" id="GO:1990904">
    <property type="term" value="C:ribonucleoprotein complex"/>
    <property type="evidence" value="ECO:0007669"/>
    <property type="project" value="UniProtKB-KW"/>
</dbReference>
<dbReference type="GO" id="GO:0005840">
    <property type="term" value="C:ribosome"/>
    <property type="evidence" value="ECO:0007669"/>
    <property type="project" value="UniProtKB-KW"/>
</dbReference>
<dbReference type="GO" id="GO:0019843">
    <property type="term" value="F:rRNA binding"/>
    <property type="evidence" value="ECO:0007669"/>
    <property type="project" value="UniProtKB-UniRule"/>
</dbReference>
<dbReference type="GO" id="GO:0003735">
    <property type="term" value="F:structural constituent of ribosome"/>
    <property type="evidence" value="ECO:0007669"/>
    <property type="project" value="InterPro"/>
</dbReference>
<dbReference type="GO" id="GO:0006412">
    <property type="term" value="P:translation"/>
    <property type="evidence" value="ECO:0007669"/>
    <property type="project" value="UniProtKB-UniRule"/>
</dbReference>
<dbReference type="FunFam" id="3.30.1370.30:FF:000002">
    <property type="entry name" value="30S ribosomal protein S8"/>
    <property type="match status" value="1"/>
</dbReference>
<dbReference type="FunFam" id="3.30.1490.10:FF:000001">
    <property type="entry name" value="30S ribosomal protein S8"/>
    <property type="match status" value="1"/>
</dbReference>
<dbReference type="Gene3D" id="3.30.1370.30">
    <property type="match status" value="1"/>
</dbReference>
<dbReference type="Gene3D" id="3.30.1490.10">
    <property type="match status" value="1"/>
</dbReference>
<dbReference type="HAMAP" id="MF_01302_B">
    <property type="entry name" value="Ribosomal_uS8_B"/>
    <property type="match status" value="1"/>
</dbReference>
<dbReference type="InterPro" id="IPR000630">
    <property type="entry name" value="Ribosomal_uS8"/>
</dbReference>
<dbReference type="InterPro" id="IPR047863">
    <property type="entry name" value="Ribosomal_uS8_CS"/>
</dbReference>
<dbReference type="InterPro" id="IPR035987">
    <property type="entry name" value="Ribosomal_uS8_sf"/>
</dbReference>
<dbReference type="NCBIfam" id="NF001109">
    <property type="entry name" value="PRK00136.1"/>
    <property type="match status" value="1"/>
</dbReference>
<dbReference type="PANTHER" id="PTHR11758">
    <property type="entry name" value="40S RIBOSOMAL PROTEIN S15A"/>
    <property type="match status" value="1"/>
</dbReference>
<dbReference type="Pfam" id="PF00410">
    <property type="entry name" value="Ribosomal_S8"/>
    <property type="match status" value="1"/>
</dbReference>
<dbReference type="SUPFAM" id="SSF56047">
    <property type="entry name" value="Ribosomal protein S8"/>
    <property type="match status" value="1"/>
</dbReference>
<dbReference type="PROSITE" id="PS00053">
    <property type="entry name" value="RIBOSOMAL_S8"/>
    <property type="match status" value="1"/>
</dbReference>
<evidence type="ECO:0000255" key="1">
    <source>
        <dbReference type="HAMAP-Rule" id="MF_01302"/>
    </source>
</evidence>
<evidence type="ECO:0000305" key="2"/>
<accession>A5N4R1</accession>
<name>RS8_CLOK5</name>
<keyword id="KW-1185">Reference proteome</keyword>
<keyword id="KW-0687">Ribonucleoprotein</keyword>
<keyword id="KW-0689">Ribosomal protein</keyword>
<keyword id="KW-0694">RNA-binding</keyword>
<keyword id="KW-0699">rRNA-binding</keyword>
<comment type="function">
    <text evidence="1">One of the primary rRNA binding proteins, it binds directly to 16S rRNA central domain where it helps coordinate assembly of the platform of the 30S subunit.</text>
</comment>
<comment type="subunit">
    <text evidence="1">Part of the 30S ribosomal subunit. Contacts proteins S5 and S12.</text>
</comment>
<comment type="similarity">
    <text evidence="1">Belongs to the universal ribosomal protein uS8 family.</text>
</comment>
<reference key="1">
    <citation type="journal article" date="2008" name="Proc. Natl. Acad. Sci. U.S.A.">
        <title>The genome of Clostridium kluyveri, a strict anaerobe with unique metabolic features.</title>
        <authorList>
            <person name="Seedorf H."/>
            <person name="Fricke W.F."/>
            <person name="Veith B."/>
            <person name="Brueggemann H."/>
            <person name="Liesegang H."/>
            <person name="Strittmatter A."/>
            <person name="Miethke M."/>
            <person name="Buckel W."/>
            <person name="Hinderberger J."/>
            <person name="Li F."/>
            <person name="Hagemeier C."/>
            <person name="Thauer R.K."/>
            <person name="Gottschalk G."/>
        </authorList>
    </citation>
    <scope>NUCLEOTIDE SEQUENCE [LARGE SCALE GENOMIC DNA]</scope>
    <source>
        <strain>ATCC 8527 / DSM 555 / NBRC 12016 / NCIMB 10680 / K1</strain>
    </source>
</reference>
<gene>
    <name evidence="1" type="primary">rpsH</name>
    <name type="ordered locus">CKL_0238</name>
</gene>
<proteinExistence type="inferred from homology"/>
<organism>
    <name type="scientific">Clostridium kluyveri (strain ATCC 8527 / DSM 555 / NBRC 12016 / NCIMB 10680 / K1)</name>
    <dbReference type="NCBI Taxonomy" id="431943"/>
    <lineage>
        <taxon>Bacteria</taxon>
        <taxon>Bacillati</taxon>
        <taxon>Bacillota</taxon>
        <taxon>Clostridia</taxon>
        <taxon>Eubacteriales</taxon>
        <taxon>Clostridiaceae</taxon>
        <taxon>Clostridium</taxon>
    </lineage>
</organism>
<protein>
    <recommendedName>
        <fullName evidence="1">Small ribosomal subunit protein uS8</fullName>
    </recommendedName>
    <alternativeName>
        <fullName evidence="2">30S ribosomal protein S8</fullName>
    </alternativeName>
</protein>